<proteinExistence type="inferred from homology"/>
<sequence length="214" mass="23599">MVGWLKGLIVYKLQRGNRSQITLNCNGVGYEVQITQREWLTLENDQTIQLWIHQSISADNWQFFGFKSTQERDIFRELISVNGVGPQAGMALMQECKSQELVEAISNGDLRRLCKAQGIGKRTAERLAVELRASIAAFAGMDPAPSLAEGVSSEQMPESGADVEATLSMLGYDDLEVRRAIRAIAEGSDGPPPPGDDQDAWLRGCLQWLSRDSA</sequence>
<keyword id="KW-0963">Cytoplasm</keyword>
<keyword id="KW-0227">DNA damage</keyword>
<keyword id="KW-0233">DNA recombination</keyword>
<keyword id="KW-0234">DNA repair</keyword>
<keyword id="KW-0238">DNA-binding</keyword>
<comment type="function">
    <text evidence="1">The RuvA-RuvB-RuvC complex processes Holliday junction (HJ) DNA during genetic recombination and DNA repair, while the RuvA-RuvB complex plays an important role in the rescue of blocked DNA replication forks via replication fork reversal (RFR). RuvA specifically binds to HJ cruciform DNA, conferring on it an open structure. The RuvB hexamer acts as an ATP-dependent pump, pulling dsDNA into and through the RuvAB complex. HJ branch migration allows RuvC to scan DNA until it finds its consensus sequence, where it cleaves and resolves the cruciform DNA.</text>
</comment>
<comment type="subunit">
    <text evidence="1">Homotetramer. Forms an RuvA(8)-RuvB(12)-Holliday junction (HJ) complex. HJ DNA is sandwiched between 2 RuvA tetramers; dsDNA enters through RuvA and exits via RuvB. An RuvB hexamer assembles on each DNA strand where it exits the tetramer. Each RuvB hexamer is contacted by two RuvA subunits (via domain III) on 2 adjacent RuvB subunits; this complex drives branch migration. In the full resolvosome a probable DNA-RuvA(4)-RuvB(12)-RuvC(2) complex forms which resolves the HJ.</text>
</comment>
<comment type="subcellular location">
    <subcellularLocation>
        <location evidence="1">Cytoplasm</location>
    </subcellularLocation>
</comment>
<comment type="domain">
    <text evidence="1">Has three domains with a flexible linker between the domains II and III and assumes an 'L' shape. Domain III is highly mobile and contacts RuvB.</text>
</comment>
<comment type="similarity">
    <text evidence="1">Belongs to the RuvA family.</text>
</comment>
<protein>
    <recommendedName>
        <fullName evidence="1">Holliday junction branch migration complex subunit RuvA</fullName>
    </recommendedName>
</protein>
<reference key="1">
    <citation type="submission" date="2005-07" db="EMBL/GenBank/DDBJ databases">
        <title>Complete sequence of Synechococcus sp. CC9605.</title>
        <authorList>
            <consortium name="US DOE Joint Genome Institute"/>
            <person name="Copeland A."/>
            <person name="Lucas S."/>
            <person name="Lapidus A."/>
            <person name="Barry K."/>
            <person name="Detter J.C."/>
            <person name="Glavina T."/>
            <person name="Hammon N."/>
            <person name="Israni S."/>
            <person name="Pitluck S."/>
            <person name="Schmutz J."/>
            <person name="Martinez M."/>
            <person name="Larimer F."/>
            <person name="Land M."/>
            <person name="Kyrpides N."/>
            <person name="Ivanova N."/>
            <person name="Richardson P."/>
        </authorList>
    </citation>
    <scope>NUCLEOTIDE SEQUENCE [LARGE SCALE GENOMIC DNA]</scope>
    <source>
        <strain>CC9605</strain>
    </source>
</reference>
<feature type="chain" id="PRO_1000002586" description="Holliday junction branch migration complex subunit RuvA">
    <location>
        <begin position="1"/>
        <end position="214"/>
    </location>
</feature>
<feature type="region of interest" description="Domain I" evidence="1">
    <location>
        <begin position="1"/>
        <end position="67"/>
    </location>
</feature>
<feature type="region of interest" description="Domain II" evidence="1">
    <location>
        <begin position="68"/>
        <end position="146"/>
    </location>
</feature>
<feature type="region of interest" description="Flexible linker" evidence="1">
    <location>
        <begin position="147"/>
        <end position="154"/>
    </location>
</feature>
<feature type="region of interest" description="Domain III" evidence="1">
    <location>
        <begin position="155"/>
        <end position="214"/>
    </location>
</feature>
<name>RUVA_SYNSC</name>
<evidence type="ECO:0000255" key="1">
    <source>
        <dbReference type="HAMAP-Rule" id="MF_00031"/>
    </source>
</evidence>
<organism>
    <name type="scientific">Synechococcus sp. (strain CC9605)</name>
    <dbReference type="NCBI Taxonomy" id="110662"/>
    <lineage>
        <taxon>Bacteria</taxon>
        <taxon>Bacillati</taxon>
        <taxon>Cyanobacteriota</taxon>
        <taxon>Cyanophyceae</taxon>
        <taxon>Synechococcales</taxon>
        <taxon>Synechococcaceae</taxon>
        <taxon>Synechococcus</taxon>
    </lineage>
</organism>
<accession>Q3AKG6</accession>
<dbReference type="EMBL" id="CP000110">
    <property type="protein sequence ID" value="ABB34916.1"/>
    <property type="molecule type" value="Genomic_DNA"/>
</dbReference>
<dbReference type="RefSeq" id="WP_011364137.1">
    <property type="nucleotide sequence ID" value="NC_007516.1"/>
</dbReference>
<dbReference type="SMR" id="Q3AKG6"/>
<dbReference type="STRING" id="110662.Syncc9605_1161"/>
<dbReference type="KEGG" id="syd:Syncc9605_1161"/>
<dbReference type="eggNOG" id="COG0632">
    <property type="taxonomic scope" value="Bacteria"/>
</dbReference>
<dbReference type="HOGENOM" id="CLU_087936_0_0_3"/>
<dbReference type="OrthoDB" id="5293449at2"/>
<dbReference type="GO" id="GO:0005737">
    <property type="term" value="C:cytoplasm"/>
    <property type="evidence" value="ECO:0007669"/>
    <property type="project" value="UniProtKB-SubCell"/>
</dbReference>
<dbReference type="GO" id="GO:0009379">
    <property type="term" value="C:Holliday junction helicase complex"/>
    <property type="evidence" value="ECO:0007669"/>
    <property type="project" value="InterPro"/>
</dbReference>
<dbReference type="GO" id="GO:0048476">
    <property type="term" value="C:Holliday junction resolvase complex"/>
    <property type="evidence" value="ECO:0007669"/>
    <property type="project" value="UniProtKB-UniRule"/>
</dbReference>
<dbReference type="GO" id="GO:0005524">
    <property type="term" value="F:ATP binding"/>
    <property type="evidence" value="ECO:0007669"/>
    <property type="project" value="InterPro"/>
</dbReference>
<dbReference type="GO" id="GO:0000400">
    <property type="term" value="F:four-way junction DNA binding"/>
    <property type="evidence" value="ECO:0007669"/>
    <property type="project" value="UniProtKB-UniRule"/>
</dbReference>
<dbReference type="GO" id="GO:0009378">
    <property type="term" value="F:four-way junction helicase activity"/>
    <property type="evidence" value="ECO:0007669"/>
    <property type="project" value="InterPro"/>
</dbReference>
<dbReference type="GO" id="GO:0006310">
    <property type="term" value="P:DNA recombination"/>
    <property type="evidence" value="ECO:0007669"/>
    <property type="project" value="UniProtKB-UniRule"/>
</dbReference>
<dbReference type="GO" id="GO:0006281">
    <property type="term" value="P:DNA repair"/>
    <property type="evidence" value="ECO:0007669"/>
    <property type="project" value="UniProtKB-UniRule"/>
</dbReference>
<dbReference type="Gene3D" id="1.10.150.20">
    <property type="entry name" value="5' to 3' exonuclease, C-terminal subdomain"/>
    <property type="match status" value="1"/>
</dbReference>
<dbReference type="Gene3D" id="2.40.50.140">
    <property type="entry name" value="Nucleic acid-binding proteins"/>
    <property type="match status" value="1"/>
</dbReference>
<dbReference type="HAMAP" id="MF_00031">
    <property type="entry name" value="DNA_HJ_migration_RuvA"/>
    <property type="match status" value="1"/>
</dbReference>
<dbReference type="InterPro" id="IPR013849">
    <property type="entry name" value="DNA_helicase_Holl-junc_RuvA_I"/>
</dbReference>
<dbReference type="InterPro" id="IPR012340">
    <property type="entry name" value="NA-bd_OB-fold"/>
</dbReference>
<dbReference type="InterPro" id="IPR000085">
    <property type="entry name" value="RuvA"/>
</dbReference>
<dbReference type="InterPro" id="IPR010994">
    <property type="entry name" value="RuvA_2-like"/>
</dbReference>
<dbReference type="InterPro" id="IPR011114">
    <property type="entry name" value="RuvA_C"/>
</dbReference>
<dbReference type="NCBIfam" id="TIGR00084">
    <property type="entry name" value="ruvA"/>
    <property type="match status" value="1"/>
</dbReference>
<dbReference type="Pfam" id="PF14520">
    <property type="entry name" value="HHH_5"/>
    <property type="match status" value="1"/>
</dbReference>
<dbReference type="Pfam" id="PF07499">
    <property type="entry name" value="RuvA_C"/>
    <property type="match status" value="1"/>
</dbReference>
<dbReference type="Pfam" id="PF01330">
    <property type="entry name" value="RuvA_N"/>
    <property type="match status" value="1"/>
</dbReference>
<dbReference type="SUPFAM" id="SSF50249">
    <property type="entry name" value="Nucleic acid-binding proteins"/>
    <property type="match status" value="1"/>
</dbReference>
<dbReference type="SUPFAM" id="SSF47781">
    <property type="entry name" value="RuvA domain 2-like"/>
    <property type="match status" value="1"/>
</dbReference>
<gene>
    <name evidence="1" type="primary">ruvA</name>
    <name type="ordered locus">Syncc9605_1161</name>
</gene>